<name>TMAR_ECO24</name>
<protein>
    <recommendedName>
        <fullName evidence="1">Pole-localizer protein TmaR</fullName>
    </recommendedName>
</protein>
<evidence type="ECO:0000255" key="1">
    <source>
        <dbReference type="HAMAP-Rule" id="MF_00683"/>
    </source>
</evidence>
<dbReference type="EMBL" id="CP000800">
    <property type="protein sequence ID" value="ABV18673.1"/>
    <property type="molecule type" value="Genomic_DNA"/>
</dbReference>
<dbReference type="RefSeq" id="WP_000450409.1">
    <property type="nucleotide sequence ID" value="NC_009801.1"/>
</dbReference>
<dbReference type="SMR" id="A7ZNH9"/>
<dbReference type="KEGG" id="ecw:EcE24377A_2298"/>
<dbReference type="HOGENOM" id="CLU_153146_0_0_6"/>
<dbReference type="Proteomes" id="UP000001122">
    <property type="component" value="Chromosome"/>
</dbReference>
<dbReference type="GO" id="GO:0005829">
    <property type="term" value="C:cytosol"/>
    <property type="evidence" value="ECO:0007669"/>
    <property type="project" value="TreeGrafter"/>
</dbReference>
<dbReference type="HAMAP" id="MF_00683">
    <property type="entry name" value="Pole_loc_TmaR"/>
    <property type="match status" value="1"/>
</dbReference>
<dbReference type="InterPro" id="IPR007458">
    <property type="entry name" value="DUF496"/>
</dbReference>
<dbReference type="InterPro" id="IPR053375">
    <property type="entry name" value="UPF0265"/>
</dbReference>
<dbReference type="NCBIfam" id="NF003844">
    <property type="entry name" value="PRK05423.1"/>
    <property type="match status" value="1"/>
</dbReference>
<dbReference type="NCBIfam" id="NF040881">
    <property type="entry name" value="PTS_reg_TmaR"/>
    <property type="match status" value="1"/>
</dbReference>
<dbReference type="PANTHER" id="PTHR39591">
    <property type="entry name" value="UPF0265 PROTEIN YEEX"/>
    <property type="match status" value="1"/>
</dbReference>
<dbReference type="PANTHER" id="PTHR39591:SF1">
    <property type="entry name" value="UPF0265 PROTEIN YEEX"/>
    <property type="match status" value="1"/>
</dbReference>
<dbReference type="Pfam" id="PF04363">
    <property type="entry name" value="DUF496"/>
    <property type="match status" value="1"/>
</dbReference>
<dbReference type="PIRSF" id="PIRSF028773">
    <property type="entry name" value="UCP028773"/>
    <property type="match status" value="1"/>
</dbReference>
<sequence length="109" mass="12778">METTKPSFQDVLEFVRLFRRKNKLQREIQDVEKKIRDNQKRVLLLDNLSDYIKPGMSVEAIQGIIASMKGDYEDRVDDYIIKNAELSKERRDISKKLKAMGEMKNGEAK</sequence>
<proteinExistence type="inferred from homology"/>
<feature type="chain" id="PRO_1000061976" description="Pole-localizer protein TmaR">
    <location>
        <begin position="1"/>
        <end position="109"/>
    </location>
</feature>
<feature type="coiled-coil region" evidence="1">
    <location>
        <begin position="14"/>
        <end position="41"/>
    </location>
</feature>
<organism>
    <name type="scientific">Escherichia coli O139:H28 (strain E24377A / ETEC)</name>
    <dbReference type="NCBI Taxonomy" id="331111"/>
    <lineage>
        <taxon>Bacteria</taxon>
        <taxon>Pseudomonadati</taxon>
        <taxon>Pseudomonadota</taxon>
        <taxon>Gammaproteobacteria</taxon>
        <taxon>Enterobacterales</taxon>
        <taxon>Enterobacteriaceae</taxon>
        <taxon>Escherichia</taxon>
    </lineage>
</organism>
<keyword id="KW-0175">Coiled coil</keyword>
<keyword id="KW-0963">Cytoplasm</keyword>
<keyword id="KW-1185">Reference proteome</keyword>
<reference key="1">
    <citation type="journal article" date="2008" name="J. Bacteriol.">
        <title>The pangenome structure of Escherichia coli: comparative genomic analysis of E. coli commensal and pathogenic isolates.</title>
        <authorList>
            <person name="Rasko D.A."/>
            <person name="Rosovitz M.J."/>
            <person name="Myers G.S.A."/>
            <person name="Mongodin E.F."/>
            <person name="Fricke W.F."/>
            <person name="Gajer P."/>
            <person name="Crabtree J."/>
            <person name="Sebaihia M."/>
            <person name="Thomson N.R."/>
            <person name="Chaudhuri R."/>
            <person name="Henderson I.R."/>
            <person name="Sperandio V."/>
            <person name="Ravel J."/>
        </authorList>
    </citation>
    <scope>NUCLEOTIDE SEQUENCE [LARGE SCALE GENOMIC DNA]</scope>
    <source>
        <strain>E24377A / ETEC</strain>
    </source>
</reference>
<gene>
    <name evidence="1" type="primary">tmaR</name>
    <name type="ordered locus">EcE24377A_2298</name>
</gene>
<comment type="function">
    <text evidence="1">Pole-localizer protein involved in the regulation of several cellular processes.</text>
</comment>
<comment type="subcellular location">
    <subcellularLocation>
        <location evidence="1">Cytoplasm</location>
    </subcellularLocation>
    <text evidence="1">Forms clusters that localize mainly near one pole of the cell.</text>
</comment>
<comment type="similarity">
    <text evidence="1">Belongs to the pole-localizer TmaR family.</text>
</comment>
<accession>A7ZNH9</accession>